<proteinExistence type="inferred from homology"/>
<feature type="chain" id="PRO_0000262127" description="Phosphatidylserine decarboxylase beta chain" evidence="1">
    <location>
        <begin position="1"/>
        <end position="258"/>
    </location>
</feature>
<feature type="chain" id="PRO_0000262128" description="Phosphatidylserine decarboxylase alpha chain" evidence="1">
    <location>
        <begin position="259"/>
        <end position="306"/>
    </location>
</feature>
<feature type="active site" description="Charge relay system; for autoendoproteolytic cleavage activity" evidence="1">
    <location>
        <position position="98"/>
    </location>
</feature>
<feature type="active site" description="Charge relay system; for autoendoproteolytic cleavage activity" evidence="1">
    <location>
        <position position="155"/>
    </location>
</feature>
<feature type="active site" description="Charge relay system; for autoendoproteolytic cleavage activity" evidence="1">
    <location>
        <position position="259"/>
    </location>
</feature>
<feature type="active site" description="Schiff-base intermediate with substrate; via pyruvic acid; for decarboxylase activity" evidence="1">
    <location>
        <position position="259"/>
    </location>
</feature>
<feature type="site" description="Cleavage (non-hydrolytic); by autocatalysis" evidence="1">
    <location>
        <begin position="258"/>
        <end position="259"/>
    </location>
</feature>
<feature type="modified residue" description="Pyruvic acid (Ser); by autocatalysis" evidence="1">
    <location>
        <position position="259"/>
    </location>
</feature>
<sequence>MANTVQHRLRDWLLSLYQHLLPQRTLSQLMYRLTRHRIVWLTGLQIRLFARIFGVNLKEAEFSSPKDYPHFNAFFTRALGKEARPIADSADAVVSPVDGCISQLGSLTDDRLLQAKGWSYNLVELLGGSKSRAAPFRGGQFATLYLSPKDYHRIHMPLAGHLREMTYLPGRLFSVSPKTVNGIHNLFARNERVVNVFDTEAGPLAMVLVGAIFVGSIETVWAGQITPPYRHQPHHQLYEGEKAISLAKGQEMGRFNMGSTVILIFPPDTIHWQSELQAEMPVRMGQPLGQLITAVQTEVEKQWANA</sequence>
<comment type="function">
    <text evidence="1">Catalyzes the formation of phosphatidylethanolamine (PtdEtn) from phosphatidylserine (PtdSer).</text>
</comment>
<comment type="catalytic activity">
    <reaction evidence="1">
        <text>a 1,2-diacyl-sn-glycero-3-phospho-L-serine + H(+) = a 1,2-diacyl-sn-glycero-3-phosphoethanolamine + CO2</text>
        <dbReference type="Rhea" id="RHEA:20828"/>
        <dbReference type="ChEBI" id="CHEBI:15378"/>
        <dbReference type="ChEBI" id="CHEBI:16526"/>
        <dbReference type="ChEBI" id="CHEBI:57262"/>
        <dbReference type="ChEBI" id="CHEBI:64612"/>
        <dbReference type="EC" id="4.1.1.65"/>
    </reaction>
</comment>
<comment type="cofactor">
    <cofactor evidence="1">
        <name>pyruvate</name>
        <dbReference type="ChEBI" id="CHEBI:15361"/>
    </cofactor>
    <text evidence="1">Binds 1 pyruvoyl group covalently per subunit.</text>
</comment>
<comment type="pathway">
    <text evidence="1">Phospholipid metabolism; phosphatidylethanolamine biosynthesis; phosphatidylethanolamine from CDP-diacylglycerol: step 2/2.</text>
</comment>
<comment type="subunit">
    <text evidence="1">Heterodimer of a large membrane-associated beta subunit and a small pyruvoyl-containing alpha subunit.</text>
</comment>
<comment type="subcellular location">
    <subcellularLocation>
        <location evidence="1">Cell membrane</location>
        <topology evidence="1">Peripheral membrane protein</topology>
    </subcellularLocation>
</comment>
<comment type="PTM">
    <text evidence="1">Is synthesized initially as an inactive proenzyme. Formation of the active enzyme involves a self-maturation process in which the active site pyruvoyl group is generated from an internal serine residue via an autocatalytic post-translational modification. Two non-identical subunits are generated from the proenzyme in this reaction, and the pyruvate is formed at the N-terminus of the alpha chain, which is derived from the carboxyl end of the proenzyme. The autoendoproteolytic cleavage occurs by a canonical serine protease mechanism, in which the side chain hydroxyl group of the serine supplies its oxygen atom to form the C-terminus of the beta chain, while the remainder of the serine residue undergoes an oxidative deamination to produce ammonia and the pyruvoyl prosthetic group on the alpha chain. During this reaction, the Ser that is part of the protease active site of the proenzyme becomes the pyruvoyl prosthetic group, which constitutes an essential element of the active site of the mature decarboxylase.</text>
</comment>
<comment type="similarity">
    <text evidence="1">Belongs to the phosphatidylserine decarboxylase family. PSD-B subfamily. Prokaryotic type I sub-subfamily.</text>
</comment>
<dbReference type="EC" id="4.1.1.65" evidence="1"/>
<dbReference type="EMBL" id="CP000127">
    <property type="protein sequence ID" value="ABA59342.1"/>
    <property type="molecule type" value="Genomic_DNA"/>
</dbReference>
<dbReference type="SMR" id="Q3J754"/>
<dbReference type="FunCoup" id="Q3J754">
    <property type="interactions" value="291"/>
</dbReference>
<dbReference type="STRING" id="323261.Noc_2896"/>
<dbReference type="KEGG" id="noc:Noc_2896"/>
<dbReference type="eggNOG" id="COG0688">
    <property type="taxonomic scope" value="Bacteria"/>
</dbReference>
<dbReference type="HOGENOM" id="CLU_029061_4_1_6"/>
<dbReference type="InParanoid" id="Q3J754"/>
<dbReference type="UniPathway" id="UPA00558">
    <property type="reaction ID" value="UER00616"/>
</dbReference>
<dbReference type="Proteomes" id="UP000006838">
    <property type="component" value="Chromosome"/>
</dbReference>
<dbReference type="GO" id="GO:0005886">
    <property type="term" value="C:plasma membrane"/>
    <property type="evidence" value="ECO:0007669"/>
    <property type="project" value="UniProtKB-SubCell"/>
</dbReference>
<dbReference type="GO" id="GO:0004609">
    <property type="term" value="F:phosphatidylserine decarboxylase activity"/>
    <property type="evidence" value="ECO:0007669"/>
    <property type="project" value="UniProtKB-UniRule"/>
</dbReference>
<dbReference type="GO" id="GO:0006646">
    <property type="term" value="P:phosphatidylethanolamine biosynthetic process"/>
    <property type="evidence" value="ECO:0007669"/>
    <property type="project" value="UniProtKB-UniRule"/>
</dbReference>
<dbReference type="HAMAP" id="MF_00662">
    <property type="entry name" value="PS_decarb_PSD_B_type1"/>
    <property type="match status" value="1"/>
</dbReference>
<dbReference type="InterPro" id="IPR003817">
    <property type="entry name" value="PS_Dcarbxylase"/>
</dbReference>
<dbReference type="InterPro" id="IPR033177">
    <property type="entry name" value="PSD-B"/>
</dbReference>
<dbReference type="InterPro" id="IPR033178">
    <property type="entry name" value="PSD_type1_pro"/>
</dbReference>
<dbReference type="NCBIfam" id="TIGR00163">
    <property type="entry name" value="PS_decarb"/>
    <property type="match status" value="1"/>
</dbReference>
<dbReference type="PANTHER" id="PTHR10067">
    <property type="entry name" value="PHOSPHATIDYLSERINE DECARBOXYLASE"/>
    <property type="match status" value="1"/>
</dbReference>
<dbReference type="PANTHER" id="PTHR10067:SF6">
    <property type="entry name" value="PHOSPHATIDYLSERINE DECARBOXYLASE PROENZYME, MITOCHONDRIAL"/>
    <property type="match status" value="1"/>
</dbReference>
<dbReference type="Pfam" id="PF02666">
    <property type="entry name" value="PS_Dcarbxylase"/>
    <property type="match status" value="1"/>
</dbReference>
<gene>
    <name evidence="1" type="primary">psd</name>
    <name type="ordered locus">Noc_2896</name>
</gene>
<evidence type="ECO:0000255" key="1">
    <source>
        <dbReference type="HAMAP-Rule" id="MF_00662"/>
    </source>
</evidence>
<accession>Q3J754</accession>
<reference key="1">
    <citation type="journal article" date="2006" name="Appl. Environ. Microbiol.">
        <title>Complete genome sequence of the marine, chemolithoautotrophic, ammonia-oxidizing bacterium Nitrosococcus oceani ATCC 19707.</title>
        <authorList>
            <person name="Klotz M.G."/>
            <person name="Arp D.J."/>
            <person name="Chain P.S.G."/>
            <person name="El-Sheikh A.F."/>
            <person name="Hauser L.J."/>
            <person name="Hommes N.G."/>
            <person name="Larimer F.W."/>
            <person name="Malfatti S.A."/>
            <person name="Norton J.M."/>
            <person name="Poret-Peterson A.T."/>
            <person name="Vergez L.M."/>
            <person name="Ward B.B."/>
        </authorList>
    </citation>
    <scope>NUCLEOTIDE SEQUENCE [LARGE SCALE GENOMIC DNA]</scope>
    <source>
        <strain>ATCC 19707 / BCRC 17464 / JCM 30415 / NCIMB 11848 / C-107</strain>
    </source>
</reference>
<keyword id="KW-1003">Cell membrane</keyword>
<keyword id="KW-0210">Decarboxylase</keyword>
<keyword id="KW-0444">Lipid biosynthesis</keyword>
<keyword id="KW-0443">Lipid metabolism</keyword>
<keyword id="KW-0456">Lyase</keyword>
<keyword id="KW-0472">Membrane</keyword>
<keyword id="KW-0594">Phospholipid biosynthesis</keyword>
<keyword id="KW-1208">Phospholipid metabolism</keyword>
<keyword id="KW-0670">Pyruvate</keyword>
<keyword id="KW-1185">Reference proteome</keyword>
<keyword id="KW-0865">Zymogen</keyword>
<organism>
    <name type="scientific">Nitrosococcus oceani (strain ATCC 19707 / BCRC 17464 / JCM 30415 / NCIMB 11848 / C-107)</name>
    <dbReference type="NCBI Taxonomy" id="323261"/>
    <lineage>
        <taxon>Bacteria</taxon>
        <taxon>Pseudomonadati</taxon>
        <taxon>Pseudomonadota</taxon>
        <taxon>Gammaproteobacteria</taxon>
        <taxon>Chromatiales</taxon>
        <taxon>Chromatiaceae</taxon>
        <taxon>Nitrosococcus</taxon>
    </lineage>
</organism>
<protein>
    <recommendedName>
        <fullName evidence="1">Phosphatidylserine decarboxylase proenzyme</fullName>
        <ecNumber evidence="1">4.1.1.65</ecNumber>
    </recommendedName>
    <component>
        <recommendedName>
            <fullName evidence="1">Phosphatidylserine decarboxylase alpha chain</fullName>
        </recommendedName>
    </component>
    <component>
        <recommendedName>
            <fullName evidence="1">Phosphatidylserine decarboxylase beta chain</fullName>
        </recommendedName>
    </component>
</protein>
<name>PSD_NITOC</name>